<comment type="function">
    <text evidence="1">DNA-dependent RNA polymerase catalyzes the transcription of DNA into RNA using the four ribonucleoside triphosphates as substrates.</text>
</comment>
<comment type="catalytic activity">
    <reaction evidence="1">
        <text>RNA(n) + a ribonucleoside 5'-triphosphate = RNA(n+1) + diphosphate</text>
        <dbReference type="Rhea" id="RHEA:21248"/>
        <dbReference type="Rhea" id="RHEA-COMP:14527"/>
        <dbReference type="Rhea" id="RHEA-COMP:17342"/>
        <dbReference type="ChEBI" id="CHEBI:33019"/>
        <dbReference type="ChEBI" id="CHEBI:61557"/>
        <dbReference type="ChEBI" id="CHEBI:140395"/>
        <dbReference type="EC" id="2.7.7.6"/>
    </reaction>
</comment>
<comment type="subunit">
    <text evidence="1">The RNAP catalytic core consists of 2 alpha, 1 beta, 1 beta' and 1 omega subunit. When a sigma factor is associated with the core the holoenzyme is formed, which can initiate transcription.</text>
</comment>
<comment type="similarity">
    <text evidence="1">Belongs to the RNA polymerase beta chain family.</text>
</comment>
<feature type="chain" id="PRO_0000300335" description="DNA-directed RNA polymerase subunit beta">
    <location>
        <begin position="1"/>
        <end position="1196"/>
    </location>
</feature>
<accession>A2RML9</accession>
<evidence type="ECO:0000255" key="1">
    <source>
        <dbReference type="HAMAP-Rule" id="MF_01321"/>
    </source>
</evidence>
<keyword id="KW-0240">DNA-directed RNA polymerase</keyword>
<keyword id="KW-0548">Nucleotidyltransferase</keyword>
<keyword id="KW-0804">Transcription</keyword>
<keyword id="KW-0808">Transferase</keyword>
<gene>
    <name evidence="1" type="primary">rpoB</name>
    <name type="ordered locus">llmg_1982</name>
</gene>
<organism>
    <name type="scientific">Lactococcus lactis subsp. cremoris (strain MG1363)</name>
    <dbReference type="NCBI Taxonomy" id="416870"/>
    <lineage>
        <taxon>Bacteria</taxon>
        <taxon>Bacillati</taxon>
        <taxon>Bacillota</taxon>
        <taxon>Bacilli</taxon>
        <taxon>Lactobacillales</taxon>
        <taxon>Streptococcaceae</taxon>
        <taxon>Lactococcus</taxon>
        <taxon>Lactococcus cremoris subsp. cremoris</taxon>
    </lineage>
</organism>
<name>RPOB_LACLM</name>
<reference key="1">
    <citation type="journal article" date="2007" name="J. Bacteriol.">
        <title>The complete genome sequence of the lactic acid bacterial paradigm Lactococcus lactis subsp. cremoris MG1363.</title>
        <authorList>
            <person name="Wegmann U."/>
            <person name="O'Connell-Motherway M."/>
            <person name="Zomer A."/>
            <person name="Buist G."/>
            <person name="Shearman C."/>
            <person name="Canchaya C."/>
            <person name="Ventura M."/>
            <person name="Goesmann A."/>
            <person name="Gasson M.J."/>
            <person name="Kuipers O.P."/>
            <person name="van Sinderen D."/>
            <person name="Kok J."/>
        </authorList>
    </citation>
    <scope>NUCLEOTIDE SEQUENCE [LARGE SCALE GENOMIC DNA]</scope>
    <source>
        <strain>MG1363</strain>
    </source>
</reference>
<proteinExistence type="inferred from homology"/>
<protein>
    <recommendedName>
        <fullName evidence="1">DNA-directed RNA polymerase subunit beta</fullName>
        <shortName evidence="1">RNAP subunit beta</shortName>
        <ecNumber evidence="1">2.7.7.6</ecNumber>
    </recommendedName>
    <alternativeName>
        <fullName evidence="1">RNA polymerase subunit beta</fullName>
    </alternativeName>
    <alternativeName>
        <fullName evidence="1">Transcriptase subunit beta</fullName>
    </alternativeName>
</protein>
<sequence>MAGHDVKYGKHRTRRSFSRIKEVIGLPNLIEVQTLSYKNFLDEGLANVFKEMFPIDNFAGTMELEFVGYEMKTPKYTVEEARAHDANYSAPIYVTFRLVNKETGELKTQEVFFGDFPLMTEMGTFINNGSERLIVSQLVRSPGSYFHLKTDKNGLESFGHTTIPNRGAWFELDTDAKGIGYVRIDRTRKLTFTTMLRALGFGSDDEILELLGETQLLTDTIAKDVHKNPADTRVEEALKDIYDRLRPGEPKTADSSRGLLVARFFDPKRYDFAPVGRYKFNKKLALKNRLLGLTLAEPIVDPETGEILVNTDTLVTRDVLDLIEPLLDNGLGNFVVEPSDDAVIPEPITLQSIKVYSPKDSERVVTLLSNGNPDSECRVLTPADVISNISYWLGLAEGIGKVDDIDHLGNRRIRSVGELLQNQVRIGLSRMERVIRERMSSSENENITPQGLINIRPVTASIKEFFGSSQLSQFMDQHNPLSELSHKRRFSALGPGGISRDRASYEVRDVHYTHYGRMCPIETPEGPNIGLINNLSSYAKVNEYGFIMSPYRRVDRVNGIVTDEVEYLTADEEDNYTVAQANSPLTDDSRFANETVMARHTGNNIEVEASTADYMDVSPKQVIAVAAACIPFLENDDSNRALMGANMQRQAVPLIDPHAPWIGTGMEHQTARDSGAALLAKHAGVVEYVDGNEIRVRRTSGELDIYNITKYRRSNSGTSYNQRPLARLGEKVEKNDIIADGPSMENGEMALGQNPLVAYMTWEGYNFEDAVIMSERLIKDDVYTSIAIEEYESETRDTKLGPEEITREIPNVGDEALKNLDESGIIRIGAEVKDGDLLVGKVTPKGETDPTPEERLLRAIFGEKAREVRDTSLRVPHGGGGIVHDVRVFTRENGDELPSGVNKLVRVFIAQKRKIHVGDKMAGRHGNKGVVSNIVPVEDMPYLPDGTPIDIMLNPLGVPSRMNIGQVMELHLGMAARTLGIHIATPVFDGASDEDIWDTVKEAGMAADAKTVLYDGRTGEPFDNRISVGVMYMIKLHHMVDDKLHARSVGPYSLVTQQPLGGKAQFGGQRFGEMEVWALEAYGAANVLQEILTYKSDDVIGRTRAYEAIVKGERIPKPGLPESFRVLVKELQSLGLDMKVLDADRNVLDLRELDEDEVMTRPDNTEITPEMLEAQEAIVAQAEAEEEALINADIEK</sequence>
<dbReference type="EC" id="2.7.7.6" evidence="1"/>
<dbReference type="EMBL" id="AM406671">
    <property type="protein sequence ID" value="CAL98553.1"/>
    <property type="molecule type" value="Genomic_DNA"/>
</dbReference>
<dbReference type="RefSeq" id="WP_011835718.1">
    <property type="nucleotide sequence ID" value="NC_009004.1"/>
</dbReference>
<dbReference type="SMR" id="A2RML9"/>
<dbReference type="STRING" id="416870.llmg_1982"/>
<dbReference type="GeneID" id="61110128"/>
<dbReference type="KEGG" id="llm:llmg_1982"/>
<dbReference type="eggNOG" id="COG0085">
    <property type="taxonomic scope" value="Bacteria"/>
</dbReference>
<dbReference type="HOGENOM" id="CLU_000524_4_1_9"/>
<dbReference type="OrthoDB" id="9803954at2"/>
<dbReference type="PhylomeDB" id="A2RML9"/>
<dbReference type="Proteomes" id="UP000000364">
    <property type="component" value="Chromosome"/>
</dbReference>
<dbReference type="GO" id="GO:0000428">
    <property type="term" value="C:DNA-directed RNA polymerase complex"/>
    <property type="evidence" value="ECO:0007669"/>
    <property type="project" value="UniProtKB-KW"/>
</dbReference>
<dbReference type="GO" id="GO:0003677">
    <property type="term" value="F:DNA binding"/>
    <property type="evidence" value="ECO:0007669"/>
    <property type="project" value="UniProtKB-UniRule"/>
</dbReference>
<dbReference type="GO" id="GO:0003899">
    <property type="term" value="F:DNA-directed RNA polymerase activity"/>
    <property type="evidence" value="ECO:0007669"/>
    <property type="project" value="UniProtKB-UniRule"/>
</dbReference>
<dbReference type="GO" id="GO:0032549">
    <property type="term" value="F:ribonucleoside binding"/>
    <property type="evidence" value="ECO:0007669"/>
    <property type="project" value="InterPro"/>
</dbReference>
<dbReference type="GO" id="GO:0006351">
    <property type="term" value="P:DNA-templated transcription"/>
    <property type="evidence" value="ECO:0007669"/>
    <property type="project" value="UniProtKB-UniRule"/>
</dbReference>
<dbReference type="CDD" id="cd00653">
    <property type="entry name" value="RNA_pol_B_RPB2"/>
    <property type="match status" value="1"/>
</dbReference>
<dbReference type="Gene3D" id="2.40.50.100">
    <property type="match status" value="1"/>
</dbReference>
<dbReference type="Gene3D" id="2.40.50.150">
    <property type="match status" value="1"/>
</dbReference>
<dbReference type="Gene3D" id="3.90.1100.10">
    <property type="match status" value="3"/>
</dbReference>
<dbReference type="Gene3D" id="2.40.270.10">
    <property type="entry name" value="DNA-directed RNA polymerase, subunit 2, domain 6"/>
    <property type="match status" value="1"/>
</dbReference>
<dbReference type="Gene3D" id="3.90.1800.10">
    <property type="entry name" value="RNA polymerase alpha subunit dimerisation domain"/>
    <property type="match status" value="1"/>
</dbReference>
<dbReference type="Gene3D" id="3.90.1110.10">
    <property type="entry name" value="RNA polymerase Rpb2, domain 2"/>
    <property type="match status" value="1"/>
</dbReference>
<dbReference type="HAMAP" id="MF_01321">
    <property type="entry name" value="RNApol_bact_RpoB"/>
    <property type="match status" value="1"/>
</dbReference>
<dbReference type="InterPro" id="IPR019462">
    <property type="entry name" value="DNA-dir_RNA_pol_bsu_external_1"/>
</dbReference>
<dbReference type="InterPro" id="IPR015712">
    <property type="entry name" value="DNA-dir_RNA_pol_su2"/>
</dbReference>
<dbReference type="InterPro" id="IPR007120">
    <property type="entry name" value="DNA-dir_RNAP_su2_dom"/>
</dbReference>
<dbReference type="InterPro" id="IPR037033">
    <property type="entry name" value="DNA-dir_RNAP_su2_hyb_sf"/>
</dbReference>
<dbReference type="InterPro" id="IPR010243">
    <property type="entry name" value="RNA_pol_bsu_bac"/>
</dbReference>
<dbReference type="InterPro" id="IPR007121">
    <property type="entry name" value="RNA_pol_bsu_CS"/>
</dbReference>
<dbReference type="InterPro" id="IPR007644">
    <property type="entry name" value="RNA_pol_bsu_protrusion"/>
</dbReference>
<dbReference type="InterPro" id="IPR007642">
    <property type="entry name" value="RNA_pol_Rpb2_2"/>
</dbReference>
<dbReference type="InterPro" id="IPR037034">
    <property type="entry name" value="RNA_pol_Rpb2_2_sf"/>
</dbReference>
<dbReference type="InterPro" id="IPR007645">
    <property type="entry name" value="RNA_pol_Rpb2_3"/>
</dbReference>
<dbReference type="InterPro" id="IPR007641">
    <property type="entry name" value="RNA_pol_Rpb2_7"/>
</dbReference>
<dbReference type="InterPro" id="IPR014724">
    <property type="entry name" value="RNA_pol_RPB2_OB-fold"/>
</dbReference>
<dbReference type="NCBIfam" id="NF001616">
    <property type="entry name" value="PRK00405.1"/>
    <property type="match status" value="1"/>
</dbReference>
<dbReference type="NCBIfam" id="TIGR02013">
    <property type="entry name" value="rpoB"/>
    <property type="match status" value="1"/>
</dbReference>
<dbReference type="PANTHER" id="PTHR20856">
    <property type="entry name" value="DNA-DIRECTED RNA POLYMERASE I SUBUNIT 2"/>
    <property type="match status" value="1"/>
</dbReference>
<dbReference type="Pfam" id="PF04563">
    <property type="entry name" value="RNA_pol_Rpb2_1"/>
    <property type="match status" value="1"/>
</dbReference>
<dbReference type="Pfam" id="PF04561">
    <property type="entry name" value="RNA_pol_Rpb2_2"/>
    <property type="match status" value="2"/>
</dbReference>
<dbReference type="Pfam" id="PF04565">
    <property type="entry name" value="RNA_pol_Rpb2_3"/>
    <property type="match status" value="1"/>
</dbReference>
<dbReference type="Pfam" id="PF10385">
    <property type="entry name" value="RNA_pol_Rpb2_45"/>
    <property type="match status" value="1"/>
</dbReference>
<dbReference type="Pfam" id="PF00562">
    <property type="entry name" value="RNA_pol_Rpb2_6"/>
    <property type="match status" value="1"/>
</dbReference>
<dbReference type="Pfam" id="PF04560">
    <property type="entry name" value="RNA_pol_Rpb2_7"/>
    <property type="match status" value="1"/>
</dbReference>
<dbReference type="SUPFAM" id="SSF64484">
    <property type="entry name" value="beta and beta-prime subunits of DNA dependent RNA-polymerase"/>
    <property type="match status" value="1"/>
</dbReference>
<dbReference type="PROSITE" id="PS01166">
    <property type="entry name" value="RNA_POL_BETA"/>
    <property type="match status" value="1"/>
</dbReference>